<comment type="function">
    <text evidence="1 5">Mitochondrial electroneutral antiporter that exports citrate from the mitochondria into the cytosol in exchange for malate. Also able to mediate the exchange of citrate for isocitrate, phosphoenolpyruvate, cis-aconitate and to a lesser extent trans-aconitate, maleate and succinate (PubMed:2804096). In the cytoplasm, citrate plays important roles in fatty acid and sterol synthesis, regulation of glycolysis, protein acetylation, and other physiopathological processes (By similarity).</text>
</comment>
<comment type="catalytic activity">
    <reaction evidence="5">
        <text>(S)-malate(in) + citrate(out) = (S)-malate(out) + citrate(in)</text>
        <dbReference type="Rhea" id="RHEA:72483"/>
        <dbReference type="ChEBI" id="CHEBI:15589"/>
        <dbReference type="ChEBI" id="CHEBI:16947"/>
    </reaction>
</comment>
<comment type="catalytic activity">
    <reaction evidence="1">
        <text>citrate(out) + succinate(in) = citrate(in) + succinate(out)</text>
        <dbReference type="Rhea" id="RHEA:28835"/>
        <dbReference type="ChEBI" id="CHEBI:16947"/>
        <dbReference type="ChEBI" id="CHEBI:30031"/>
    </reaction>
</comment>
<comment type="catalytic activity">
    <reaction evidence="5">
        <text>D-threo-isocitrate(in) + citrate(out) = D-threo-isocitrate(out) + citrate(in)</text>
        <dbReference type="Rhea" id="RHEA:72471"/>
        <dbReference type="ChEBI" id="CHEBI:15562"/>
        <dbReference type="ChEBI" id="CHEBI:16947"/>
    </reaction>
</comment>
<comment type="catalytic activity">
    <reaction evidence="5">
        <text>cis-aconitate(in) + citrate(out) = cis-aconitate(out) + citrate(in)</text>
        <dbReference type="Rhea" id="RHEA:72475"/>
        <dbReference type="ChEBI" id="CHEBI:16383"/>
        <dbReference type="ChEBI" id="CHEBI:16947"/>
    </reaction>
</comment>
<comment type="catalytic activity">
    <reaction evidence="5">
        <text>trans-aconitate(in) + citrate(out) = trans-aconitate(out) + citrate(in)</text>
        <dbReference type="Rhea" id="RHEA:72479"/>
        <dbReference type="ChEBI" id="CHEBI:15708"/>
        <dbReference type="ChEBI" id="CHEBI:16947"/>
    </reaction>
</comment>
<comment type="catalytic activity">
    <reaction evidence="5">
        <text>phosphoenolpyruvate(in) + citrate(out) = phosphoenolpyruvate(out) + citrate(in)</text>
        <dbReference type="Rhea" id="RHEA:72487"/>
        <dbReference type="ChEBI" id="CHEBI:16947"/>
        <dbReference type="ChEBI" id="CHEBI:58702"/>
    </reaction>
</comment>
<comment type="catalytic activity">
    <reaction evidence="1">
        <text>maleate(in) + citrate(out) = maleate(out) + citrate(in)</text>
        <dbReference type="Rhea" id="RHEA:72491"/>
        <dbReference type="ChEBI" id="CHEBI:16947"/>
        <dbReference type="ChEBI" id="CHEBI:30780"/>
    </reaction>
</comment>
<comment type="subcellular location">
    <subcellularLocation>
        <location evidence="4">Mitochondrion inner membrane</location>
        <topology evidence="2">Multi-pass membrane protein</topology>
    </subcellularLocation>
</comment>
<comment type="PTM">
    <text evidence="4">Possesses a short cleavable presequence, which, however, is found to be dispensable both for targeting to mitochondria and insertion into the inner membrane. However, the presequence is required to keep SLC25A1 in a soluble state and thus in an import-competent state. Mature SLC25A1 lacking the presequence is prone to aggregation.</text>
</comment>
<comment type="similarity">
    <text evidence="10">Belongs to the mitochondrial carrier (TC 2.A.29) family.</text>
</comment>
<reference key="1">
    <citation type="journal article" date="1993" name="J. Biol. Chem.">
        <title>The mitochondrial tricarboxylate transport protein. cDNA cloning, primary structure, and comparison with other mitochondrial transport proteins.</title>
        <authorList>
            <person name="Kaplan R.S."/>
            <person name="Mayor J.A."/>
            <person name="Wood D.O."/>
        </authorList>
    </citation>
    <scope>NUCLEOTIDE SEQUENCE [MRNA]</scope>
    <scope>PARTIAL PROTEIN SEQUENCE</scope>
    <source>
        <strain>Sprague-Dawley</strain>
        <tissue>Liver</tissue>
    </source>
</reference>
<reference key="2">
    <citation type="journal article" date="2004" name="Genome Res.">
        <title>The status, quality, and expansion of the NIH full-length cDNA project: the Mammalian Gene Collection (MGC).</title>
        <authorList>
            <consortium name="The MGC Project Team"/>
        </authorList>
    </citation>
    <scope>NUCLEOTIDE SEQUENCE [LARGE SCALE MRNA]</scope>
    <source>
        <tissue>Kidney</tissue>
    </source>
</reference>
<reference key="3">
    <citation type="journal article" date="1989" name="Biochim. Biophys. Acta">
        <title>Identification and purification of the tricarboxylate carrier from rat liver mitochondria.</title>
        <authorList>
            <person name="Bisaccia F."/>
            <person name="De Palma A."/>
            <person name="Palmieri F."/>
        </authorList>
    </citation>
    <scope>FUNCTION</scope>
    <scope>TRANSPORTER ACTIVITY</scope>
    <scope>SUBCELLULAR LOCATION</scope>
</reference>
<reference key="4">
    <citation type="journal article" date="2003" name="J. Mol. Biol.">
        <title>Biogenesis of rat mitochondrial citrate carrier (CIC): the N-terminal presequence facilitates the solubility of the preprotein but does not act as a targeting signal.</title>
        <authorList>
            <person name="Zara V."/>
            <person name="Ferramosca A."/>
            <person name="Palmisano I."/>
            <person name="Palmieri F."/>
            <person name="Rassow J."/>
        </authorList>
    </citation>
    <scope>SUBCELLULAR LOCATION</scope>
    <scope>PROTEOLYTIC PROCESSING</scope>
</reference>
<gene>
    <name type="primary">Slc25a1</name>
    <name type="synonym">Slc20a3</name>
</gene>
<proteinExistence type="evidence at protein level"/>
<protein>
    <recommendedName>
        <fullName>Tricarboxylate transport protein, mitochondrial</fullName>
    </recommendedName>
    <alternativeName>
        <fullName evidence="7">Citrate carrier</fullName>
        <shortName evidence="7">CIC</shortName>
    </alternativeName>
    <alternativeName>
        <fullName evidence="9">Citrate transport protein</fullName>
        <shortName evidence="9">CTP</shortName>
    </alternativeName>
    <alternativeName>
        <fullName>Solute carrier family 25 member 1</fullName>
    </alternativeName>
    <alternativeName>
        <fullName evidence="8">Tricarboxylate carrier protein</fullName>
    </alternativeName>
</protein>
<evidence type="ECO:0000250" key="1">
    <source>
        <dbReference type="UniProtKB" id="P53007"/>
    </source>
</evidence>
<evidence type="ECO:0000255" key="2"/>
<evidence type="ECO:0000255" key="3">
    <source>
        <dbReference type="PROSITE-ProRule" id="PRU00282"/>
    </source>
</evidence>
<evidence type="ECO:0000269" key="4">
    <source>
    </source>
</evidence>
<evidence type="ECO:0000269" key="5">
    <source>
    </source>
</evidence>
<evidence type="ECO:0000269" key="6">
    <source>
    </source>
</evidence>
<evidence type="ECO:0000303" key="7">
    <source>
    </source>
</evidence>
<evidence type="ECO:0000303" key="8">
    <source>
    </source>
</evidence>
<evidence type="ECO:0000303" key="9">
    <source>
    </source>
</evidence>
<evidence type="ECO:0000305" key="10"/>
<sequence length="311" mass="33835">MAAPRAPRALTAAAPGSGKAKLTHPGKAILAGGLAGGIEICITFPTEYVKTQLQLDERANPPRYRGIGDCVRQTVRSHGVLGLYRGLSSLLYGSIPKAAVRFGMFEFLSNHMRDAQGRLDSRRGLLCGLGAGVAEAVVVVCPMETVKVKFIHDQTSSNPKYRGFFHGVREIVREQGLKGTYQGLTATVLKQGSNQAIRFFVMTSLRNWYQGDNPNKPMNPLITGVFGAVAGAASVFGNTPLDVIKTRMQGLEAHKYRNTLDCGVQILKNEGPKAFYKGTVPRLGRVCLDVAIVFVIYDEVVKLLNKVWKTD</sequence>
<dbReference type="EMBL" id="L12016">
    <property type="protein sequence ID" value="AAA18899.1"/>
    <property type="molecule type" value="mRNA"/>
</dbReference>
<dbReference type="EMBL" id="BC100077">
    <property type="protein sequence ID" value="AAI00078.1"/>
    <property type="molecule type" value="mRNA"/>
</dbReference>
<dbReference type="PIR" id="A46595">
    <property type="entry name" value="A46595"/>
</dbReference>
<dbReference type="RefSeq" id="NP_059003.1">
    <property type="nucleotide sequence ID" value="NM_017307.3"/>
</dbReference>
<dbReference type="SMR" id="P32089"/>
<dbReference type="BioGRID" id="248354">
    <property type="interactions" value="2"/>
</dbReference>
<dbReference type="FunCoup" id="P32089">
    <property type="interactions" value="1743"/>
</dbReference>
<dbReference type="IntAct" id="P32089">
    <property type="interactions" value="3"/>
</dbReference>
<dbReference type="STRING" id="10116.ENSRNOP00000000306"/>
<dbReference type="TCDB" id="2.A.29.7.1">
    <property type="family name" value="the mitochondrial carrier (mc) family"/>
</dbReference>
<dbReference type="CarbonylDB" id="P32089"/>
<dbReference type="iPTMnet" id="P32089"/>
<dbReference type="PhosphoSitePlus" id="P32089"/>
<dbReference type="jPOST" id="P32089"/>
<dbReference type="PaxDb" id="10116-ENSRNOP00000000306"/>
<dbReference type="GeneID" id="29743"/>
<dbReference type="KEGG" id="rno:29743"/>
<dbReference type="AGR" id="RGD:3703"/>
<dbReference type="CTD" id="6576"/>
<dbReference type="RGD" id="3703">
    <property type="gene designation" value="Slc25a1"/>
</dbReference>
<dbReference type="VEuPathDB" id="HostDB:ENSRNOG00000038001"/>
<dbReference type="eggNOG" id="KOG0756">
    <property type="taxonomic scope" value="Eukaryota"/>
</dbReference>
<dbReference type="HOGENOM" id="CLU_015166_5_1_1"/>
<dbReference type="InParanoid" id="P32089"/>
<dbReference type="OrthoDB" id="44467at2759"/>
<dbReference type="PhylomeDB" id="P32089"/>
<dbReference type="TreeFam" id="TF105786"/>
<dbReference type="Reactome" id="R-RNO-428643">
    <property type="pathway name" value="Organic anion transporters"/>
</dbReference>
<dbReference type="PRO" id="PR:P32089"/>
<dbReference type="Proteomes" id="UP000002494">
    <property type="component" value="Chromosome 11"/>
</dbReference>
<dbReference type="Bgee" id="ENSRNOG00000038001">
    <property type="expression patterns" value="Expressed in ovary and 19 other cell types or tissues"/>
</dbReference>
<dbReference type="GO" id="GO:0005743">
    <property type="term" value="C:mitochondrial inner membrane"/>
    <property type="evidence" value="ECO:0000250"/>
    <property type="project" value="UniProtKB"/>
</dbReference>
<dbReference type="GO" id="GO:0005739">
    <property type="term" value="C:mitochondrion"/>
    <property type="evidence" value="ECO:0000266"/>
    <property type="project" value="RGD"/>
</dbReference>
<dbReference type="GO" id="GO:0015297">
    <property type="term" value="F:antiporter activity"/>
    <property type="evidence" value="ECO:0007669"/>
    <property type="project" value="UniProtKB-KW"/>
</dbReference>
<dbReference type="GO" id="GO:0071913">
    <property type="term" value="F:citrate secondary active transmembrane transporter activity"/>
    <property type="evidence" value="ECO:0000314"/>
    <property type="project" value="UniProtKB"/>
</dbReference>
<dbReference type="GO" id="GO:0015137">
    <property type="term" value="F:citrate transmembrane transporter activity"/>
    <property type="evidence" value="ECO:0000304"/>
    <property type="project" value="RGD"/>
</dbReference>
<dbReference type="GO" id="GO:0015142">
    <property type="term" value="F:tricarboxylic acid transmembrane transporter activity"/>
    <property type="evidence" value="ECO:0000266"/>
    <property type="project" value="RGD"/>
</dbReference>
<dbReference type="GO" id="GO:0006843">
    <property type="term" value="P:mitochondrial citrate transmembrane transport"/>
    <property type="evidence" value="ECO:0000314"/>
    <property type="project" value="UniProtKB"/>
</dbReference>
<dbReference type="FunFam" id="1.50.40.10:FF:000007">
    <property type="entry name" value="Mitochondrial tricarboxylate transport protein-like"/>
    <property type="match status" value="1"/>
</dbReference>
<dbReference type="Gene3D" id="1.50.40.10">
    <property type="entry name" value="Mitochondrial carrier domain"/>
    <property type="match status" value="1"/>
</dbReference>
<dbReference type="InterPro" id="IPR002067">
    <property type="entry name" value="Mit_carrier"/>
</dbReference>
<dbReference type="InterPro" id="IPR018108">
    <property type="entry name" value="Mitochondrial_sb/sol_carrier"/>
</dbReference>
<dbReference type="InterPro" id="IPR023395">
    <property type="entry name" value="Mt_carrier_dom_sf"/>
</dbReference>
<dbReference type="InterPro" id="IPR049563">
    <property type="entry name" value="TXTP-like"/>
</dbReference>
<dbReference type="PANTHER" id="PTHR45788">
    <property type="entry name" value="SUCCINATE/FUMARATE MITOCHONDRIAL TRANSPORTER-RELATED"/>
    <property type="match status" value="1"/>
</dbReference>
<dbReference type="PANTHER" id="PTHR45788:SF4">
    <property type="entry name" value="TRICARBOXYLATE TRANSPORT PROTEIN, MITOCHONDRIAL"/>
    <property type="match status" value="1"/>
</dbReference>
<dbReference type="Pfam" id="PF00153">
    <property type="entry name" value="Mito_carr"/>
    <property type="match status" value="3"/>
</dbReference>
<dbReference type="PRINTS" id="PR00926">
    <property type="entry name" value="MITOCARRIER"/>
</dbReference>
<dbReference type="SUPFAM" id="SSF103506">
    <property type="entry name" value="Mitochondrial carrier"/>
    <property type="match status" value="1"/>
</dbReference>
<dbReference type="PROSITE" id="PS50920">
    <property type="entry name" value="SOLCAR"/>
    <property type="match status" value="3"/>
</dbReference>
<name>TXTP_RAT</name>
<feature type="propeptide" id="PRO_0000456577" description="Removed in mature form" evidence="6">
    <location>
        <begin position="1"/>
        <end position="13"/>
    </location>
</feature>
<feature type="chain" id="PRO_0000019263" description="Tricarboxylate transport protein, mitochondrial">
    <location>
        <begin position="14"/>
        <end position="311"/>
    </location>
</feature>
<feature type="transmembrane region" description="Helical; Name=1" evidence="2">
    <location>
        <begin position="29"/>
        <end position="46"/>
    </location>
</feature>
<feature type="transmembrane region" description="Helical; Name=2" evidence="2">
    <location>
        <begin position="86"/>
        <end position="105"/>
    </location>
</feature>
<feature type="transmembrane region" description="Helical; Name=3" evidence="2">
    <location>
        <begin position="129"/>
        <end position="143"/>
    </location>
</feature>
<feature type="transmembrane region" description="Helical; Name=4" evidence="2">
    <location>
        <begin position="183"/>
        <end position="202"/>
    </location>
</feature>
<feature type="transmembrane region" description="Helical; Name=5" evidence="2">
    <location>
        <begin position="224"/>
        <end position="241"/>
    </location>
</feature>
<feature type="transmembrane region" description="Helical; Name=6" evidence="2">
    <location>
        <begin position="278"/>
        <end position="297"/>
    </location>
</feature>
<feature type="repeat" description="Solcar 1" evidence="3">
    <location>
        <begin position="23"/>
        <end position="111"/>
    </location>
</feature>
<feature type="repeat" description="Solcar 2" evidence="3">
    <location>
        <begin position="122"/>
        <end position="208"/>
    </location>
</feature>
<feature type="repeat" description="Solcar 3" evidence="3">
    <location>
        <begin position="218"/>
        <end position="303"/>
    </location>
</feature>
<feature type="modified residue" description="Phosphoserine" evidence="1">
    <location>
        <position position="156"/>
    </location>
</feature>
<accession>P32089</accession>
<accession>Q498T8</accession>
<keyword id="KW-0050">Antiport</keyword>
<keyword id="KW-0903">Direct protein sequencing</keyword>
<keyword id="KW-0472">Membrane</keyword>
<keyword id="KW-0496">Mitochondrion</keyword>
<keyword id="KW-0999">Mitochondrion inner membrane</keyword>
<keyword id="KW-0597">Phosphoprotein</keyword>
<keyword id="KW-1185">Reference proteome</keyword>
<keyword id="KW-0677">Repeat</keyword>
<keyword id="KW-0812">Transmembrane</keyword>
<keyword id="KW-1133">Transmembrane helix</keyword>
<keyword id="KW-0813">Transport</keyword>
<organism>
    <name type="scientific">Rattus norvegicus</name>
    <name type="common">Rat</name>
    <dbReference type="NCBI Taxonomy" id="10116"/>
    <lineage>
        <taxon>Eukaryota</taxon>
        <taxon>Metazoa</taxon>
        <taxon>Chordata</taxon>
        <taxon>Craniata</taxon>
        <taxon>Vertebrata</taxon>
        <taxon>Euteleostomi</taxon>
        <taxon>Mammalia</taxon>
        <taxon>Eutheria</taxon>
        <taxon>Euarchontoglires</taxon>
        <taxon>Glires</taxon>
        <taxon>Rodentia</taxon>
        <taxon>Myomorpha</taxon>
        <taxon>Muroidea</taxon>
        <taxon>Muridae</taxon>
        <taxon>Murinae</taxon>
        <taxon>Rattus</taxon>
    </lineage>
</organism>